<dbReference type="EC" id="3.1.11.6" evidence="1"/>
<dbReference type="EMBL" id="AL590842">
    <property type="protein sequence ID" value="CAL21483.1"/>
    <property type="molecule type" value="Genomic_DNA"/>
</dbReference>
<dbReference type="EMBL" id="AE009952">
    <property type="protein sequence ID" value="AAM84934.1"/>
    <property type="molecule type" value="Genomic_DNA"/>
</dbReference>
<dbReference type="EMBL" id="AE017042">
    <property type="protein sequence ID" value="AAS62926.1"/>
    <property type="molecule type" value="Genomic_DNA"/>
</dbReference>
<dbReference type="PIR" id="AH0349">
    <property type="entry name" value="AH0349"/>
</dbReference>
<dbReference type="RefSeq" id="WP_002209810.1">
    <property type="nucleotide sequence ID" value="NZ_WUCM01000067.1"/>
</dbReference>
<dbReference type="RefSeq" id="YP_002347807.1">
    <property type="nucleotide sequence ID" value="NC_003143.1"/>
</dbReference>
<dbReference type="SMR" id="Q8ZCU2"/>
<dbReference type="IntAct" id="Q8ZCU2">
    <property type="interactions" value="2"/>
</dbReference>
<dbReference type="STRING" id="214092.YPO2872"/>
<dbReference type="PaxDb" id="214092-YPO2872"/>
<dbReference type="DNASU" id="1146308"/>
<dbReference type="EnsemblBacteria" id="AAS62926">
    <property type="protein sequence ID" value="AAS62926"/>
    <property type="gene ID" value="YP_2738"/>
</dbReference>
<dbReference type="GeneID" id="57975829"/>
<dbReference type="KEGG" id="ype:YPO2872"/>
<dbReference type="KEGG" id="ypk:y1361"/>
<dbReference type="KEGG" id="ypm:YP_2738"/>
<dbReference type="PATRIC" id="fig|214092.21.peg.3318"/>
<dbReference type="eggNOG" id="COG1570">
    <property type="taxonomic scope" value="Bacteria"/>
</dbReference>
<dbReference type="HOGENOM" id="CLU_023625_3_1_6"/>
<dbReference type="OMA" id="WPAVRFE"/>
<dbReference type="OrthoDB" id="9802795at2"/>
<dbReference type="Proteomes" id="UP000000815">
    <property type="component" value="Chromosome"/>
</dbReference>
<dbReference type="Proteomes" id="UP000001019">
    <property type="component" value="Chromosome"/>
</dbReference>
<dbReference type="Proteomes" id="UP000002490">
    <property type="component" value="Chromosome"/>
</dbReference>
<dbReference type="GO" id="GO:0005737">
    <property type="term" value="C:cytoplasm"/>
    <property type="evidence" value="ECO:0007669"/>
    <property type="project" value="UniProtKB-SubCell"/>
</dbReference>
<dbReference type="GO" id="GO:0009318">
    <property type="term" value="C:exodeoxyribonuclease VII complex"/>
    <property type="evidence" value="ECO:0007669"/>
    <property type="project" value="InterPro"/>
</dbReference>
<dbReference type="GO" id="GO:0008855">
    <property type="term" value="F:exodeoxyribonuclease VII activity"/>
    <property type="evidence" value="ECO:0007669"/>
    <property type="project" value="UniProtKB-UniRule"/>
</dbReference>
<dbReference type="GO" id="GO:0003676">
    <property type="term" value="F:nucleic acid binding"/>
    <property type="evidence" value="ECO:0007669"/>
    <property type="project" value="InterPro"/>
</dbReference>
<dbReference type="GO" id="GO:0006308">
    <property type="term" value="P:DNA catabolic process"/>
    <property type="evidence" value="ECO:0007669"/>
    <property type="project" value="UniProtKB-UniRule"/>
</dbReference>
<dbReference type="CDD" id="cd04489">
    <property type="entry name" value="ExoVII_LU_OBF"/>
    <property type="match status" value="1"/>
</dbReference>
<dbReference type="HAMAP" id="MF_00378">
    <property type="entry name" value="Exonuc_7_L"/>
    <property type="match status" value="1"/>
</dbReference>
<dbReference type="InterPro" id="IPR003753">
    <property type="entry name" value="Exonuc_VII_L"/>
</dbReference>
<dbReference type="InterPro" id="IPR020579">
    <property type="entry name" value="Exonuc_VII_lsu_C"/>
</dbReference>
<dbReference type="InterPro" id="IPR025824">
    <property type="entry name" value="OB-fold_nuc-bd_dom"/>
</dbReference>
<dbReference type="NCBIfam" id="TIGR00237">
    <property type="entry name" value="xseA"/>
    <property type="match status" value="1"/>
</dbReference>
<dbReference type="PANTHER" id="PTHR30008">
    <property type="entry name" value="EXODEOXYRIBONUCLEASE 7 LARGE SUBUNIT"/>
    <property type="match status" value="1"/>
</dbReference>
<dbReference type="PANTHER" id="PTHR30008:SF0">
    <property type="entry name" value="EXODEOXYRIBONUCLEASE 7 LARGE SUBUNIT"/>
    <property type="match status" value="1"/>
</dbReference>
<dbReference type="Pfam" id="PF02601">
    <property type="entry name" value="Exonuc_VII_L"/>
    <property type="match status" value="1"/>
</dbReference>
<dbReference type="Pfam" id="PF13742">
    <property type="entry name" value="tRNA_anti_2"/>
    <property type="match status" value="1"/>
</dbReference>
<name>EX7L_YERPE</name>
<proteinExistence type="inferred from homology"/>
<gene>
    <name evidence="1" type="primary">xseA</name>
    <name type="ordered locus">YPO2872</name>
    <name type="ordered locus">y1361</name>
    <name type="ordered locus">YP_2738</name>
</gene>
<feature type="chain" id="PRO_0000197907" description="Exodeoxyribonuclease 7 large subunit">
    <location>
        <begin position="1"/>
        <end position="459"/>
    </location>
</feature>
<keyword id="KW-0963">Cytoplasm</keyword>
<keyword id="KW-0269">Exonuclease</keyword>
<keyword id="KW-0378">Hydrolase</keyword>
<keyword id="KW-0540">Nuclease</keyword>
<keyword id="KW-1185">Reference proteome</keyword>
<sequence>MSQSSASSIFTVSRLNQTVRELLEREMGQIWLTAEISNFSQPASGHWYFTLKDDRAQVRCAMFRNSNRRTTFRPQNGQQVLVRASITLYEPRGDYQLIAESMQPAGDGLLQQQFEQLKQQLAAEGLFDQSHKQPLPHPAKQVGVITSASGAALHDVLHVLQRRDPSLPVIIYPTSVQGVDAPLQIVRAIQLANLRAECDVLIVGRGGGSLEDLWSFNDERVARAIFNSHIPIVSAVGHETDVTIADFVADLRAPTPSAAAELVSRNQIELVRQIQGQQQRMEMAMDYYLAQRNQQFTRLEHRLQQQHPHLRLARQQTLLLKLQRRLEESAQTQIRLLSKRTERLQQRLQQVQPQGQIHRYNQRVQQQEYRLRQAVERQLNGYRQRFGIACSQLEAVSPLATLARGYSVTQTPAGALLKTTKQVQAGDKLTTRLQDGWVESEITQVTVAKKSRQKKVVTQ</sequence>
<evidence type="ECO:0000255" key="1">
    <source>
        <dbReference type="HAMAP-Rule" id="MF_00378"/>
    </source>
</evidence>
<reference key="1">
    <citation type="journal article" date="2001" name="Nature">
        <title>Genome sequence of Yersinia pestis, the causative agent of plague.</title>
        <authorList>
            <person name="Parkhill J."/>
            <person name="Wren B.W."/>
            <person name="Thomson N.R."/>
            <person name="Titball R.W."/>
            <person name="Holden M.T.G."/>
            <person name="Prentice M.B."/>
            <person name="Sebaihia M."/>
            <person name="James K.D."/>
            <person name="Churcher C.M."/>
            <person name="Mungall K.L."/>
            <person name="Baker S."/>
            <person name="Basham D."/>
            <person name="Bentley S.D."/>
            <person name="Brooks K."/>
            <person name="Cerdeno-Tarraga A.-M."/>
            <person name="Chillingworth T."/>
            <person name="Cronin A."/>
            <person name="Davies R.M."/>
            <person name="Davis P."/>
            <person name="Dougan G."/>
            <person name="Feltwell T."/>
            <person name="Hamlin N."/>
            <person name="Holroyd S."/>
            <person name="Jagels K."/>
            <person name="Karlyshev A.V."/>
            <person name="Leather S."/>
            <person name="Moule S."/>
            <person name="Oyston P.C.F."/>
            <person name="Quail M.A."/>
            <person name="Rutherford K.M."/>
            <person name="Simmonds M."/>
            <person name="Skelton J."/>
            <person name="Stevens K."/>
            <person name="Whitehead S."/>
            <person name="Barrell B.G."/>
        </authorList>
    </citation>
    <scope>NUCLEOTIDE SEQUENCE [LARGE SCALE GENOMIC DNA]</scope>
    <source>
        <strain>CO-92 / Biovar Orientalis</strain>
    </source>
</reference>
<reference key="2">
    <citation type="journal article" date="2002" name="J. Bacteriol.">
        <title>Genome sequence of Yersinia pestis KIM.</title>
        <authorList>
            <person name="Deng W."/>
            <person name="Burland V."/>
            <person name="Plunkett G. III"/>
            <person name="Boutin A."/>
            <person name="Mayhew G.F."/>
            <person name="Liss P."/>
            <person name="Perna N.T."/>
            <person name="Rose D.J."/>
            <person name="Mau B."/>
            <person name="Zhou S."/>
            <person name="Schwartz D.C."/>
            <person name="Fetherston J.D."/>
            <person name="Lindler L.E."/>
            <person name="Brubaker R.R."/>
            <person name="Plano G.V."/>
            <person name="Straley S.C."/>
            <person name="McDonough K.A."/>
            <person name="Nilles M.L."/>
            <person name="Matson J.S."/>
            <person name="Blattner F.R."/>
            <person name="Perry R.D."/>
        </authorList>
    </citation>
    <scope>NUCLEOTIDE SEQUENCE [LARGE SCALE GENOMIC DNA]</scope>
    <source>
        <strain>KIM10+ / Biovar Mediaevalis</strain>
    </source>
</reference>
<reference key="3">
    <citation type="journal article" date="2004" name="DNA Res.">
        <title>Complete genome sequence of Yersinia pestis strain 91001, an isolate avirulent to humans.</title>
        <authorList>
            <person name="Song Y."/>
            <person name="Tong Z."/>
            <person name="Wang J."/>
            <person name="Wang L."/>
            <person name="Guo Z."/>
            <person name="Han Y."/>
            <person name="Zhang J."/>
            <person name="Pei D."/>
            <person name="Zhou D."/>
            <person name="Qin H."/>
            <person name="Pang X."/>
            <person name="Han Y."/>
            <person name="Zhai J."/>
            <person name="Li M."/>
            <person name="Cui B."/>
            <person name="Qi Z."/>
            <person name="Jin L."/>
            <person name="Dai R."/>
            <person name="Chen F."/>
            <person name="Li S."/>
            <person name="Ye C."/>
            <person name="Du Z."/>
            <person name="Lin W."/>
            <person name="Wang J."/>
            <person name="Yu J."/>
            <person name="Yang H."/>
            <person name="Wang J."/>
            <person name="Huang P."/>
            <person name="Yang R."/>
        </authorList>
    </citation>
    <scope>NUCLEOTIDE SEQUENCE [LARGE SCALE GENOMIC DNA]</scope>
    <source>
        <strain>91001 / Biovar Mediaevalis</strain>
    </source>
</reference>
<protein>
    <recommendedName>
        <fullName evidence="1">Exodeoxyribonuclease 7 large subunit</fullName>
        <ecNumber evidence="1">3.1.11.6</ecNumber>
    </recommendedName>
    <alternativeName>
        <fullName evidence="1">Exodeoxyribonuclease VII large subunit</fullName>
        <shortName evidence="1">Exonuclease VII large subunit</shortName>
    </alternativeName>
</protein>
<organism>
    <name type="scientific">Yersinia pestis</name>
    <dbReference type="NCBI Taxonomy" id="632"/>
    <lineage>
        <taxon>Bacteria</taxon>
        <taxon>Pseudomonadati</taxon>
        <taxon>Pseudomonadota</taxon>
        <taxon>Gammaproteobacteria</taxon>
        <taxon>Enterobacterales</taxon>
        <taxon>Yersiniaceae</taxon>
        <taxon>Yersinia</taxon>
    </lineage>
</organism>
<comment type="function">
    <text evidence="1">Bidirectionally degrades single-stranded DNA into large acid-insoluble oligonucleotides, which are then degraded further into small acid-soluble oligonucleotides.</text>
</comment>
<comment type="catalytic activity">
    <reaction evidence="1">
        <text>Exonucleolytic cleavage in either 5'- to 3'- or 3'- to 5'-direction to yield nucleoside 5'-phosphates.</text>
        <dbReference type="EC" id="3.1.11.6"/>
    </reaction>
</comment>
<comment type="subunit">
    <text evidence="1">Heterooligomer composed of large and small subunits.</text>
</comment>
<comment type="subcellular location">
    <subcellularLocation>
        <location evidence="1">Cytoplasm</location>
    </subcellularLocation>
</comment>
<comment type="similarity">
    <text evidence="1">Belongs to the XseA family.</text>
</comment>
<accession>Q8ZCU2</accession>
<accession>Q0WD31</accession>